<gene>
    <name evidence="1" type="primary">cpfC</name>
    <name type="ordered locus">cgR_1595</name>
</gene>
<proteinExistence type="inferred from homology"/>
<keyword id="KW-0963">Cytoplasm</keyword>
<keyword id="KW-0350">Heme biosynthesis</keyword>
<keyword id="KW-0408">Iron</keyword>
<keyword id="KW-0456">Lyase</keyword>
<keyword id="KW-0479">Metal-binding</keyword>
<keyword id="KW-0627">Porphyrin biosynthesis</keyword>
<accession>A4QEC1</accession>
<protein>
    <recommendedName>
        <fullName evidence="1">Coproporphyrin III ferrochelatase</fullName>
        <ecNumber evidence="1">4.99.1.9</ecNumber>
    </recommendedName>
</protein>
<reference key="1">
    <citation type="journal article" date="2007" name="Microbiology">
        <title>Comparative analysis of the Corynebacterium glutamicum group and complete genome sequence of strain R.</title>
        <authorList>
            <person name="Yukawa H."/>
            <person name="Omumasaba C.A."/>
            <person name="Nonaka H."/>
            <person name="Kos P."/>
            <person name="Okai N."/>
            <person name="Suzuki N."/>
            <person name="Suda M."/>
            <person name="Tsuge Y."/>
            <person name="Watanabe J."/>
            <person name="Ikeda Y."/>
            <person name="Vertes A.A."/>
            <person name="Inui M."/>
        </authorList>
    </citation>
    <scope>NUCLEOTIDE SEQUENCE [LARGE SCALE GENOMIC DNA]</scope>
    <source>
        <strain>R</strain>
    </source>
</reference>
<organism>
    <name type="scientific">Corynebacterium glutamicum (strain R)</name>
    <dbReference type="NCBI Taxonomy" id="340322"/>
    <lineage>
        <taxon>Bacteria</taxon>
        <taxon>Bacillati</taxon>
        <taxon>Actinomycetota</taxon>
        <taxon>Actinomycetes</taxon>
        <taxon>Mycobacteriales</taxon>
        <taxon>Corynebacteriaceae</taxon>
        <taxon>Corynebacterium</taxon>
    </lineage>
</organism>
<feature type="chain" id="PRO_1000019293" description="Coproporphyrin III ferrochelatase">
    <location>
        <begin position="1"/>
        <end position="370"/>
    </location>
</feature>
<feature type="binding site" evidence="1">
    <location>
        <position position="58"/>
    </location>
    <ligand>
        <name>Fe-coproporphyrin III</name>
        <dbReference type="ChEBI" id="CHEBI:68438"/>
    </ligand>
</feature>
<feature type="binding site" evidence="1">
    <location>
        <position position="127"/>
    </location>
    <ligand>
        <name>Fe-coproporphyrin III</name>
        <dbReference type="ChEBI" id="CHEBI:68438"/>
    </ligand>
</feature>
<feature type="binding site" evidence="1">
    <location>
        <position position="189"/>
    </location>
    <ligand>
        <name>Fe(2+)</name>
        <dbReference type="ChEBI" id="CHEBI:29033"/>
    </ligand>
</feature>
<feature type="binding site" evidence="1">
    <location>
        <position position="276"/>
    </location>
    <ligand>
        <name>Fe(2+)</name>
        <dbReference type="ChEBI" id="CHEBI:29033"/>
    </ligand>
</feature>
<comment type="function">
    <text evidence="1">Involved in coproporphyrin-dependent heme b biosynthesis. Catalyzes the insertion of ferrous iron into coproporphyrin III to form Fe-coproporphyrin III.</text>
</comment>
<comment type="catalytic activity">
    <reaction evidence="1">
        <text>Fe-coproporphyrin III + 2 H(+) = coproporphyrin III + Fe(2+)</text>
        <dbReference type="Rhea" id="RHEA:49572"/>
        <dbReference type="ChEBI" id="CHEBI:15378"/>
        <dbReference type="ChEBI" id="CHEBI:29033"/>
        <dbReference type="ChEBI" id="CHEBI:68438"/>
        <dbReference type="ChEBI" id="CHEBI:131725"/>
        <dbReference type="EC" id="4.99.1.9"/>
    </reaction>
    <physiologicalReaction direction="right-to-left" evidence="1">
        <dbReference type="Rhea" id="RHEA:49574"/>
    </physiologicalReaction>
</comment>
<comment type="pathway">
    <text evidence="1">Porphyrin-containing compound metabolism; protoheme biosynthesis.</text>
</comment>
<comment type="subcellular location">
    <subcellularLocation>
        <location evidence="1">Cytoplasm</location>
    </subcellularLocation>
</comment>
<comment type="similarity">
    <text evidence="1">Belongs to the ferrochelatase family.</text>
</comment>
<name>CPFC_CORGB</name>
<evidence type="ECO:0000255" key="1">
    <source>
        <dbReference type="HAMAP-Rule" id="MF_00323"/>
    </source>
</evidence>
<dbReference type="EC" id="4.99.1.9" evidence="1"/>
<dbReference type="EMBL" id="AP009044">
    <property type="protein sequence ID" value="BAF54587.1"/>
    <property type="molecule type" value="Genomic_DNA"/>
</dbReference>
<dbReference type="RefSeq" id="WP_003856105.1">
    <property type="nucleotide sequence ID" value="NC_009342.1"/>
</dbReference>
<dbReference type="SMR" id="A4QEC1"/>
<dbReference type="KEGG" id="cgt:cgR_1595"/>
<dbReference type="HOGENOM" id="CLU_018884_2_0_11"/>
<dbReference type="PhylomeDB" id="A4QEC1"/>
<dbReference type="UniPathway" id="UPA00252"/>
<dbReference type="Proteomes" id="UP000006698">
    <property type="component" value="Chromosome"/>
</dbReference>
<dbReference type="GO" id="GO:0005737">
    <property type="term" value="C:cytoplasm"/>
    <property type="evidence" value="ECO:0007669"/>
    <property type="project" value="UniProtKB-SubCell"/>
</dbReference>
<dbReference type="GO" id="GO:0004325">
    <property type="term" value="F:ferrochelatase activity"/>
    <property type="evidence" value="ECO:0007669"/>
    <property type="project" value="UniProtKB-UniRule"/>
</dbReference>
<dbReference type="GO" id="GO:0046872">
    <property type="term" value="F:metal ion binding"/>
    <property type="evidence" value="ECO:0007669"/>
    <property type="project" value="UniProtKB-KW"/>
</dbReference>
<dbReference type="GO" id="GO:0006783">
    <property type="term" value="P:heme biosynthetic process"/>
    <property type="evidence" value="ECO:0007669"/>
    <property type="project" value="UniProtKB-UniRule"/>
</dbReference>
<dbReference type="CDD" id="cd00419">
    <property type="entry name" value="Ferrochelatase_C"/>
    <property type="match status" value="1"/>
</dbReference>
<dbReference type="CDD" id="cd03411">
    <property type="entry name" value="Ferrochelatase_N"/>
    <property type="match status" value="1"/>
</dbReference>
<dbReference type="Gene3D" id="3.40.50.1400">
    <property type="match status" value="2"/>
</dbReference>
<dbReference type="HAMAP" id="MF_00323">
    <property type="entry name" value="Ferrochelatase"/>
    <property type="match status" value="1"/>
</dbReference>
<dbReference type="InterPro" id="IPR001015">
    <property type="entry name" value="Ferrochelatase"/>
</dbReference>
<dbReference type="InterPro" id="IPR033644">
    <property type="entry name" value="Ferrochelatase_C"/>
</dbReference>
<dbReference type="InterPro" id="IPR033659">
    <property type="entry name" value="Ferrochelatase_N"/>
</dbReference>
<dbReference type="NCBIfam" id="TIGR00109">
    <property type="entry name" value="hemH"/>
    <property type="match status" value="1"/>
</dbReference>
<dbReference type="NCBIfam" id="NF000689">
    <property type="entry name" value="PRK00035.2-1"/>
    <property type="match status" value="1"/>
</dbReference>
<dbReference type="PANTHER" id="PTHR11108">
    <property type="entry name" value="FERROCHELATASE"/>
    <property type="match status" value="1"/>
</dbReference>
<dbReference type="PANTHER" id="PTHR11108:SF1">
    <property type="entry name" value="FERROCHELATASE, MITOCHONDRIAL"/>
    <property type="match status" value="1"/>
</dbReference>
<dbReference type="Pfam" id="PF00762">
    <property type="entry name" value="Ferrochelatase"/>
    <property type="match status" value="1"/>
</dbReference>
<dbReference type="SUPFAM" id="SSF53800">
    <property type="entry name" value="Chelatase"/>
    <property type="match status" value="1"/>
</dbReference>
<sequence>MNERTSDAFDALLVLSFGGPEGHEEVRPFLENVTRGRGIPPERLDDVAVHYHHFGGISPINALNREIIANVEKELASRNRELPVYFGNRNWKPFGNEAAEQMADDGVKNALVLATSAWGGYSGCQQYQEDIRGMIKHLESQGQSVTFTKLRQFYDHPRFVSTMAQLVQDSYAKLPDELRDEARLVFTAHSIPLAADNAAGTPQDGSLYSSQVKEASALIAKAVGVSDFDVVWQSRSGSPHTPWLEPDIVDHAVELNEKGQKALVVCPVGFISDHMEVIWDLDSELMEEAEKRNMVVERVATVGPTDEFAALVVDLIEEAELKRVIERLGKLPARGSSINGAPCSEGCCGTAKHQTARVNPNARSAAPAAN</sequence>